<feature type="chain" id="PRO_1000216409" description="Cell cycle protein GpsB">
    <location>
        <begin position="1"/>
        <end position="113"/>
    </location>
</feature>
<feature type="coiled-coil region" evidence="1">
    <location>
        <begin position="36"/>
        <end position="68"/>
    </location>
</feature>
<comment type="function">
    <text evidence="1">Divisome component that associates with the complex late in its assembly, after the Z-ring is formed, and is dependent on DivIC and PBP2B for its recruitment to the divisome. Together with EzrA, is a key component of the system that regulates PBP1 localization during cell cycle progression. Its main role could be the removal of PBP1 from the cell pole after pole maturation is completed. Also contributes to the recruitment of PBP1 to the division complex. Not essential for septum formation.</text>
</comment>
<comment type="subunit">
    <text evidence="1">Forms polymers through the coiled coil domains. Interacts with PBP1, MreC and EzrA.</text>
</comment>
<comment type="subcellular location">
    <subcellularLocation>
        <location evidence="1">Cytoplasm</location>
    </subcellularLocation>
    <text evidence="1">Shuttles between the lateral wall and the division site in a cell cycle-dependent manner.</text>
</comment>
<comment type="similarity">
    <text evidence="1">Belongs to the GpsB family.</text>
</comment>
<protein>
    <recommendedName>
        <fullName evidence="1">Cell cycle protein GpsB</fullName>
    </recommendedName>
    <alternativeName>
        <fullName evidence="1">Guiding PBP1-shuttling protein</fullName>
    </alternativeName>
</protein>
<evidence type="ECO:0000255" key="1">
    <source>
        <dbReference type="HAMAP-Rule" id="MF_02011"/>
    </source>
</evidence>
<dbReference type="EMBL" id="FM242711">
    <property type="protein sequence ID" value="CAS05663.1"/>
    <property type="molecule type" value="Genomic_DNA"/>
</dbReference>
<dbReference type="RefSeq" id="WP_003722998.1">
    <property type="nucleotide sequence ID" value="NC_012488.1"/>
</dbReference>
<dbReference type="SMR" id="C1KWI8"/>
<dbReference type="KEGG" id="lmc:Lm4b_01905"/>
<dbReference type="HOGENOM" id="CLU_140309_1_0_9"/>
<dbReference type="GO" id="GO:0005737">
    <property type="term" value="C:cytoplasm"/>
    <property type="evidence" value="ECO:0007669"/>
    <property type="project" value="UniProtKB-SubCell"/>
</dbReference>
<dbReference type="GO" id="GO:0051301">
    <property type="term" value="P:cell division"/>
    <property type="evidence" value="ECO:0007669"/>
    <property type="project" value="UniProtKB-UniRule"/>
</dbReference>
<dbReference type="GO" id="GO:0008360">
    <property type="term" value="P:regulation of cell shape"/>
    <property type="evidence" value="ECO:0007669"/>
    <property type="project" value="UniProtKB-UniRule"/>
</dbReference>
<dbReference type="Gene3D" id="6.10.250.660">
    <property type="match status" value="1"/>
</dbReference>
<dbReference type="HAMAP" id="MF_02011">
    <property type="entry name" value="GpsB"/>
    <property type="match status" value="1"/>
</dbReference>
<dbReference type="InterPro" id="IPR011229">
    <property type="entry name" value="Cell_cycle_GpsB"/>
</dbReference>
<dbReference type="InterPro" id="IPR019933">
    <property type="entry name" value="DivIVA_domain"/>
</dbReference>
<dbReference type="InterPro" id="IPR007793">
    <property type="entry name" value="DivIVA_fam"/>
</dbReference>
<dbReference type="NCBIfam" id="TIGR03544">
    <property type="entry name" value="DivI1A_domain"/>
    <property type="match status" value="1"/>
</dbReference>
<dbReference type="NCBIfam" id="NF010725">
    <property type="entry name" value="PRK14127.1"/>
    <property type="match status" value="1"/>
</dbReference>
<dbReference type="PANTHER" id="PTHR35794:SF1">
    <property type="entry name" value="CELL CYCLE PROTEIN GPSB"/>
    <property type="match status" value="1"/>
</dbReference>
<dbReference type="PANTHER" id="PTHR35794">
    <property type="entry name" value="CELL DIVISION PROTEIN DIVIVA"/>
    <property type="match status" value="1"/>
</dbReference>
<dbReference type="Pfam" id="PF05103">
    <property type="entry name" value="DivIVA"/>
    <property type="match status" value="1"/>
</dbReference>
<dbReference type="PIRSF" id="PIRSF029938">
    <property type="entry name" value="UCP029938"/>
    <property type="match status" value="1"/>
</dbReference>
<accession>C1KWI8</accession>
<reference key="1">
    <citation type="journal article" date="2012" name="BMC Genomics">
        <title>Comparative genomics and transcriptomics of lineages I, II, and III strains of Listeria monocytogenes.</title>
        <authorList>
            <person name="Hain T."/>
            <person name="Ghai R."/>
            <person name="Billion A."/>
            <person name="Kuenne C.T."/>
            <person name="Steinweg C."/>
            <person name="Izar B."/>
            <person name="Mohamed W."/>
            <person name="Mraheil M."/>
            <person name="Domann E."/>
            <person name="Schaffrath S."/>
            <person name="Karst U."/>
            <person name="Goesmann A."/>
            <person name="Oehm S."/>
            <person name="Puhler A."/>
            <person name="Merkl R."/>
            <person name="Vorwerk S."/>
            <person name="Glaser P."/>
            <person name="Garrido P."/>
            <person name="Rusniok C."/>
            <person name="Buchrieser C."/>
            <person name="Goebel W."/>
            <person name="Chakraborty T."/>
        </authorList>
    </citation>
    <scope>NUCLEOTIDE SEQUENCE [LARGE SCALE GENOMIC DNA]</scope>
    <source>
        <strain>CLIP80459</strain>
    </source>
</reference>
<name>GPSB_LISMC</name>
<organism>
    <name type="scientific">Listeria monocytogenes serotype 4b (strain CLIP80459)</name>
    <dbReference type="NCBI Taxonomy" id="568819"/>
    <lineage>
        <taxon>Bacteria</taxon>
        <taxon>Bacillati</taxon>
        <taxon>Bacillota</taxon>
        <taxon>Bacilli</taxon>
        <taxon>Bacillales</taxon>
        <taxon>Listeriaceae</taxon>
        <taxon>Listeria</taxon>
    </lineage>
</organism>
<keyword id="KW-0131">Cell cycle</keyword>
<keyword id="KW-0132">Cell division</keyword>
<keyword id="KW-0133">Cell shape</keyword>
<keyword id="KW-0175">Coiled coil</keyword>
<keyword id="KW-0963">Cytoplasm</keyword>
<gene>
    <name evidence="1" type="primary">gpsB</name>
    <name type="ordered locus">Lm4b_01905</name>
</gene>
<proteinExistence type="inferred from homology"/>
<sequence>MTSEQFEYHLTGKEILEKEFKTGLRGYSPEDVDEFLDMVIKDYSTFTQEIEALQAENIRLVQELDNAPLRTSTQPAPTFQAAAQPAGTTNFDILKRLSNLEKHVFGNKLDDNE</sequence>